<accession>Q19849</accession>
<accession>D7SFJ5</accession>
<accession>D7SFJ6</accession>
<accession>D7SFJ7</accession>
<accession>D7SFJ8</accession>
<accession>D7SFJ9</accession>
<accession>Q86NH3</accession>
<accession>Q86NH4</accession>
<accession>Q86NH5</accession>
<accession>Q86NH6</accession>
<accession>Q95QI4</accession>
<accession>Q9GT31</accession>
<protein>
    <recommendedName>
        <fullName>Transcription enhancer factor-like protein egl-44</fullName>
    </recommendedName>
    <alternativeName>
        <fullName>Egg-laying defective protein 44</fullName>
    </alternativeName>
</protein>
<keyword id="KW-0025">Alternative splicing</keyword>
<keyword id="KW-0131">Cell cycle</keyword>
<keyword id="KW-0217">Developmental protein</keyword>
<keyword id="KW-0221">Differentiation</keyword>
<keyword id="KW-0238">DNA-binding</keyword>
<keyword id="KW-0524">Neurogenesis</keyword>
<keyword id="KW-0539">Nucleus</keyword>
<keyword id="KW-1185">Reference proteome</keyword>
<keyword id="KW-0804">Transcription</keyword>
<keyword id="KW-0805">Transcription regulation</keyword>
<proteinExistence type="evidence at protein level"/>
<organism>
    <name type="scientific">Caenorhabditis elegans</name>
    <dbReference type="NCBI Taxonomy" id="6239"/>
    <lineage>
        <taxon>Eukaryota</taxon>
        <taxon>Metazoa</taxon>
        <taxon>Ecdysozoa</taxon>
        <taxon>Nematoda</taxon>
        <taxon>Chromadorea</taxon>
        <taxon>Rhabditida</taxon>
        <taxon>Rhabditina</taxon>
        <taxon>Rhabditomorpha</taxon>
        <taxon>Rhabditoidea</taxon>
        <taxon>Rhabditidae</taxon>
        <taxon>Peloderinae</taxon>
        <taxon>Caenorhabditis</taxon>
    </lineage>
</organism>
<name>EGL44_CAEEL</name>
<sequence length="486" mass="53692">MNSMFCSELQQALPQMSEDVAVTAQTILNGTPPHNHFRKEWLAGAAGTTTPTTTSGGQMMTLSPPAGDGPGSAGSMAPESTSSLSDLSGDAEGVWSIDIDQAFQEALAIYPPCGRRKIIISDEGKMYGRNELIARYIKLRCGKTRTRKQVSSHIQVLARKKLRDEQAKKKGDIPSLLQQASPPGGVKSPSAVVFPPVSAAVAAITEISPQSSYSSIVPKVETDQISQQLFKSLPLWSFQQTPGLPIGMDLSQLVFQQSSPDKTVSPVKSEVVEETKPIASSQLTLHSFSAYVKCNKTSLRTELVKIENTLEKDDIDISVFYEKYPKLLRELFEKSEKKDVFFLAKCWANINVSDDVQNCQYAVDSFYSSREKFQLKVSTMACSFGNQAVEKIEQYFPIEFDGSYSFILNNSPMCDYMVKFIAELKKLNVIETMNNVLENFTVLQIVTNSETDELLMVLCFVFEVSQEPEPSCSVYRLIDGGGDSDE</sequence>
<evidence type="ECO:0000255" key="1">
    <source>
        <dbReference type="PROSITE-ProRule" id="PRU00505"/>
    </source>
</evidence>
<evidence type="ECO:0000256" key="2">
    <source>
        <dbReference type="SAM" id="MobiDB-lite"/>
    </source>
</evidence>
<evidence type="ECO:0000269" key="3">
    <source>
    </source>
</evidence>
<evidence type="ECO:0000269" key="4">
    <source>
    </source>
</evidence>
<evidence type="ECO:0000269" key="5">
    <source>
    </source>
</evidence>
<evidence type="ECO:0000269" key="6">
    <source>
    </source>
</evidence>
<evidence type="ECO:0000269" key="7">
    <source>
    </source>
</evidence>
<evidence type="ECO:0000269" key="8">
    <source>
    </source>
</evidence>
<evidence type="ECO:0000303" key="9">
    <source>
    </source>
</evidence>
<evidence type="ECO:0000305" key="10"/>
<reference key="1">
    <citation type="journal article" date="2001" name="Genes Dev.">
        <title>Inhibition of touch cell fate by egl-44 and egl-46 in C. elegans.</title>
        <authorList>
            <person name="Wu J."/>
            <person name="Duggan A."/>
            <person name="Chalfie M."/>
        </authorList>
    </citation>
    <scope>NUCLEOTIDE SEQUENCE [GENOMIC DNA]</scope>
    <scope>MUTAGENESIS OF ALA-134 AND ARG-140</scope>
    <scope>FUNCTION</scope>
    <scope>SUBCELLULAR LOCATION</scope>
    <scope>TISSUE SPECIFICITY</scope>
    <scope>DEVELOPMENTAL STAGE</scope>
</reference>
<reference key="2">
    <citation type="journal article" date="1998" name="Science">
        <title>Genome sequence of the nematode C. elegans: a platform for investigating biology.</title>
        <authorList>
            <consortium name="The C. elegans sequencing consortium"/>
        </authorList>
    </citation>
    <scope>NUCLEOTIDE SEQUENCE [LARGE SCALE GENOMIC DNA]</scope>
    <scope>ALTERNATIVE SPLICING</scope>
    <source>
        <strain>Bristol N2</strain>
    </source>
</reference>
<reference key="3">
    <citation type="journal article" date="2003" name="Development">
        <title>Distinct roles of transcription factors EGL-46 and DAF-19 in specifying the functionality of a polycystin-expressing sensory neuron necessary for C. elegans male vulva location behavior.</title>
        <authorList>
            <person name="Yu H."/>
            <person name="Pretot R.F."/>
            <person name="Burglin T.R."/>
            <person name="Sternberg P.W."/>
        </authorList>
    </citation>
    <scope>FUNCTION</scope>
    <scope>TISSUE SPECIFICITY</scope>
    <scope>DEVELOPMENTAL STAGE</scope>
    <scope>MUTAGENESIS OF ALA-134</scope>
</reference>
<reference key="4">
    <citation type="journal article" date="2013" name="Development">
        <title>Developmental stage-dependent transcriptional regulatory pathways control neuroblast lineage progression.</title>
        <authorList>
            <person name="Feng G."/>
            <person name="Yi P."/>
            <person name="Yang Y."/>
            <person name="Chai Y."/>
            <person name="Tian D."/>
            <person name="Zhu Z."/>
            <person name="Liu J."/>
            <person name="Zhou F."/>
            <person name="Cheng Z."/>
            <person name="Wang X."/>
            <person name="Li W."/>
            <person name="Ou G."/>
        </authorList>
    </citation>
    <scope>FUNCTION</scope>
    <scope>INTERACTION WITH EGL-46</scope>
    <scope>MUTAGENESIS OF ALA-91; ALA-134; ARG-140 AND ARG-145</scope>
</reference>
<reference key="5">
    <citation type="journal article" date="2013" name="Exp. Cell Res.">
        <title>Yes-associated protein homolog, YAP-1, is involved in the thermotolerance and aging in the nematode Caenorhabditis elegans.</title>
        <authorList>
            <person name="Iwasa H."/>
            <person name="Maimaiti S."/>
            <person name="Kuroyanagi H."/>
            <person name="Kawano S."/>
            <person name="Inami K."/>
            <person name="Timalsina S."/>
            <person name="Ikeda M."/>
            <person name="Nakagawa K."/>
            <person name="Hata Y."/>
        </authorList>
    </citation>
    <scope>FUNCTION</scope>
    <scope>INTERACTION WITH YAP-1</scope>
</reference>
<reference key="6">
    <citation type="journal article" date="2017" name="Dev. Biol.">
        <title>Separate transcriptionally regulated pathways specify distinct classes of sister dendrites in a nociceptive neuron.</title>
        <authorList>
            <person name="O'Brien B.M.J."/>
            <person name="Palumbos S.D."/>
            <person name="Novakovic M."/>
            <person name="Shang X."/>
            <person name="Sundararajan L."/>
            <person name="Miller D.M. III"/>
        </authorList>
    </citation>
    <scope>FUNCTION</scope>
</reference>
<reference key="7">
    <citation type="journal article" date="2018" name="Development">
        <title>Inhibition of cell fate repressors secures the differentiation of the touch receptor neurons of Caenorhabditis elegans.</title>
        <authorList>
            <person name="Zheng C."/>
            <person name="Jin F.Q."/>
            <person name="Trippe B.L."/>
            <person name="Wu J."/>
            <person name="Chalfie M."/>
        </authorList>
    </citation>
    <scope>FUNCTION</scope>
    <scope>INTERACTION WITH EGL-46</scope>
</reference>
<comment type="function">
    <text evidence="3 4 6 7 8 9">Transcription factor (PubMed:30291162). Binds to DNA sequence motif 5'-CATNNNNAAATGCAT-3' as a heterodimer with egl-46 (PubMed:30291162). Represses expression of genes involved in differentiation of touch receptor neurons (TRN), probably acting as a heterodimer with egl-46, perhaps by occupying similar cis-regulatory elements as an unc-86/mec-3 heterodimer (PubMed:30291162). Plays a role in cell fate specification of neurons, including the hook neuron HOB, and touch receptor neurons (PubMed:12954713, PubMed:30291162). Involved in male mating behavior, acting in concert with egl-46, via modulation of expression of polycystins lov-1 and pkd-2, homeodomain protein ceh-26, and neuropeptide-like protein nlp-8 (PubMed:12954713). Acts upstream of egl-46 to prevent touch cell differentiation in FLP neurons (PubMed:11274062). Plays a role in neuron differentiation by repressing the expression of zag-1 in FLP neurons, probably acting as a heterodimer with egl-46; because zag-1 represses expression of egl-46 and egl-44, together these proteins form a bistable, negative-feedback loop that regulates the choice between neuronal fates (PubMed:30291162). Also promotes HSN neuron development (PubMed:11274062). In association with egl-46, regulates cell cycle exit in the neuronal Q cell lineage (PubMed:23946438). Plays a role in specifying commissural dendrites of the PVD nociceptive neurons, acting in concert with egl-46 (PubMed:29031632). May be involved in thermal stress response downstream of yap-1 (PubMed:23396260).</text>
</comment>
<comment type="subunit">
    <text evidence="5 6 8">Interacts (via N-terminus) with egl-46 (via C-terminus); the interaction is direct; the interaction may regulate transcription (PubMed:23946438, PubMed:30291162). Interacts with yap-1 (via WW domain); the interaction may regulate transcription (PubMed:23396260).</text>
</comment>
<comment type="subcellular location">
    <subcellularLocation>
        <location evidence="3">Nucleus</location>
    </subcellularLocation>
</comment>
<comment type="alternative products">
    <event type="alternative splicing"/>
    <isoform>
        <id>Q19849-2</id>
        <name>a</name>
        <sequence type="displayed"/>
    </isoform>
    <isoform>
        <id>Q19849-1</id>
        <name>b</name>
        <sequence type="described" ref="VSP_041803 VSP_041804"/>
    </isoform>
    <isoform>
        <id>Q19849-3</id>
        <name>c</name>
        <sequence type="described" ref="VSP_041803"/>
    </isoform>
    <isoform>
        <id>Q19849-4</id>
        <name>d</name>
        <sequence type="described" ref="VSP_041801"/>
    </isoform>
    <isoform>
        <id>Q19849-6</id>
        <name>f</name>
        <sequence type="described" ref="VSP_041802 VSP_041804"/>
    </isoform>
</comment>
<comment type="tissue specificity">
    <text evidence="3 4">Expressed in HSN neurons in embryos and in the FLP neurons from the L1 stage through to adults. Not expressed in touch cells. Also expressed in larval hypodermis, intestine, pharyngeal muscle and other neurons. In adults expression is lost from some neurons, is weaker in the hypodermis but remains in the intestine (PubMed:11274062). Expressed in HOB neuron, ray neurons RnA and RnB, and the ray structural cell, Rnst; rays are male-specific genital sensilla (simple sense organs) (PubMed:12954713).</text>
</comment>
<comment type="developmental stage">
    <text evidence="3 4">Expressed from before gastrulation through to adult (PubMed:11274062). Expressed in HOB, PVX, and PVY neurons (PubMed:12954713). Expressed in most descendants of the ray precursor cells (Rn), including the ray neurons (RnA and RnB) and the ray structure cells at the L4 larval stage; rays are male-specific genital sensilla (simple sense organs) (PubMed:12954713).</text>
</comment>
<comment type="sequence caution" evidence="10">
    <conflict type="erroneous gene model prediction">
        <sequence resource="EMBL-CDS" id="AAG13397"/>
    </conflict>
</comment>
<gene>
    <name type="primary">egl-44</name>
    <name type="ORF">F28B12.2</name>
</gene>
<dbReference type="EMBL" id="AF283982">
    <property type="protein sequence ID" value="AAG13397.1"/>
    <property type="status" value="ALT_SEQ"/>
    <property type="molecule type" value="Genomic_DNA"/>
</dbReference>
<dbReference type="EMBL" id="FO080105">
    <property type="protein sequence ID" value="CCD61238.1"/>
    <property type="molecule type" value="Genomic_DNA"/>
</dbReference>
<dbReference type="EMBL" id="FO080105">
    <property type="protein sequence ID" value="CCD61239.1"/>
    <property type="molecule type" value="Genomic_DNA"/>
</dbReference>
<dbReference type="EMBL" id="FO080105">
    <property type="protein sequence ID" value="CCD61240.1"/>
    <property type="molecule type" value="Genomic_DNA"/>
</dbReference>
<dbReference type="EMBL" id="FO080105">
    <property type="protein sequence ID" value="CCD61241.1"/>
    <property type="molecule type" value="Genomic_DNA"/>
</dbReference>
<dbReference type="EMBL" id="FO080105">
    <property type="protein sequence ID" value="CCD61242.1"/>
    <property type="molecule type" value="Genomic_DNA"/>
</dbReference>
<dbReference type="RefSeq" id="NP_001367307.1">
    <molecule id="Q19849-6"/>
    <property type="nucleotide sequence ID" value="NM_001381441.3"/>
</dbReference>
<dbReference type="RefSeq" id="NP_001370297.1">
    <molecule id="Q19849-4"/>
    <property type="nucleotide sequence ID" value="NM_001383853.2"/>
</dbReference>
<dbReference type="RefSeq" id="NP_495186.3">
    <molecule id="Q19849-3"/>
    <property type="nucleotide sequence ID" value="NM_062785.3"/>
</dbReference>
<dbReference type="RefSeq" id="NP_741006.3">
    <molecule id="Q19849-1"/>
    <property type="nucleotide sequence ID" value="NM_171007.3"/>
</dbReference>
<dbReference type="RefSeq" id="NP_741007.2">
    <molecule id="Q19849-2"/>
    <property type="nucleotide sequence ID" value="NM_171850.7"/>
</dbReference>
<dbReference type="RefSeq" id="NP_871904.2">
    <property type="nucleotide sequence ID" value="NM_182104.3"/>
</dbReference>
<dbReference type="RefSeq" id="NP_871906.2">
    <property type="nucleotide sequence ID" value="NM_182106.4"/>
</dbReference>
<dbReference type="SMR" id="Q19849"/>
<dbReference type="BioGRID" id="39346">
    <property type="interactions" value="6"/>
</dbReference>
<dbReference type="FunCoup" id="Q19849">
    <property type="interactions" value="1653"/>
</dbReference>
<dbReference type="IntAct" id="Q19849">
    <property type="interactions" value="4"/>
</dbReference>
<dbReference type="STRING" id="6239.F28B12.2i.1"/>
<dbReference type="PaxDb" id="6239-F28B12.2a"/>
<dbReference type="PeptideAtlas" id="Q19849"/>
<dbReference type="EnsemblMetazoa" id="F28B12.2a.1">
    <molecule id="Q19849-2"/>
    <property type="protein sequence ID" value="F28B12.2a.1"/>
    <property type="gene ID" value="WBGene00001208"/>
</dbReference>
<dbReference type="EnsemblMetazoa" id="F28B12.2b.1">
    <molecule id="Q19849-1"/>
    <property type="protein sequence ID" value="F28B12.2b.1"/>
    <property type="gene ID" value="WBGene00001208"/>
</dbReference>
<dbReference type="EnsemblMetazoa" id="F28B12.2b.2">
    <molecule id="Q19849-1"/>
    <property type="protein sequence ID" value="F28B12.2b.2"/>
    <property type="gene ID" value="WBGene00001208"/>
</dbReference>
<dbReference type="EnsemblMetazoa" id="F28B12.2b.3">
    <molecule id="Q19849-1"/>
    <property type="protein sequence ID" value="F28B12.2b.3"/>
    <property type="gene ID" value="WBGene00001208"/>
</dbReference>
<dbReference type="EnsemblMetazoa" id="F28B12.2c.1">
    <molecule id="Q19849-3"/>
    <property type="protein sequence ID" value="F28B12.2c.1"/>
    <property type="gene ID" value="WBGene00001208"/>
</dbReference>
<dbReference type="EnsemblMetazoa" id="F28B12.2c.2">
    <molecule id="Q19849-3"/>
    <property type="protein sequence ID" value="F28B12.2c.2"/>
    <property type="gene ID" value="WBGene00001208"/>
</dbReference>
<dbReference type="EnsemblMetazoa" id="F28B12.2d.1">
    <molecule id="Q19849-4"/>
    <property type="protein sequence ID" value="F28B12.2d.1"/>
    <property type="gene ID" value="WBGene00001208"/>
</dbReference>
<dbReference type="EnsemblMetazoa" id="F28B12.2f.1">
    <molecule id="Q19849-6"/>
    <property type="protein sequence ID" value="F28B12.2f.1"/>
    <property type="gene ID" value="WBGene00001208"/>
</dbReference>
<dbReference type="GeneID" id="174005"/>
<dbReference type="KEGG" id="cel:CELE_F28B12.2"/>
<dbReference type="UCSC" id="F28B12.2a">
    <molecule id="Q19849-1"/>
    <property type="organism name" value="c. elegans"/>
</dbReference>
<dbReference type="AGR" id="WB:WBGene00001208"/>
<dbReference type="CTD" id="174005"/>
<dbReference type="WormBase" id="F28B12.2a">
    <molecule id="Q19849-2"/>
    <property type="protein sequence ID" value="CE44866"/>
    <property type="gene ID" value="WBGene00001208"/>
    <property type="gene designation" value="egl-44"/>
</dbReference>
<dbReference type="WormBase" id="F28B12.2b">
    <molecule id="Q19849-1"/>
    <property type="protein sequence ID" value="CE45037"/>
    <property type="gene ID" value="WBGene00001208"/>
    <property type="gene designation" value="egl-44"/>
</dbReference>
<dbReference type="WormBase" id="F28B12.2c">
    <molecule id="Q19849-3"/>
    <property type="protein sequence ID" value="CE44843"/>
    <property type="gene ID" value="WBGene00001208"/>
    <property type="gene designation" value="egl-44"/>
</dbReference>
<dbReference type="WormBase" id="F28B12.2d">
    <molecule id="Q19849-4"/>
    <property type="protein sequence ID" value="CE45004"/>
    <property type="gene ID" value="WBGene00001208"/>
    <property type="gene designation" value="egl-44"/>
</dbReference>
<dbReference type="WormBase" id="F28B12.2f">
    <molecule id="Q19849-6"/>
    <property type="protein sequence ID" value="CE44907"/>
    <property type="gene ID" value="WBGene00001208"/>
    <property type="gene designation" value="egl-44"/>
</dbReference>
<dbReference type="eggNOG" id="KOG3841">
    <property type="taxonomic scope" value="Eukaryota"/>
</dbReference>
<dbReference type="GeneTree" id="ENSGT00950000182956"/>
<dbReference type="InParanoid" id="Q19849"/>
<dbReference type="OMA" id="TAFHRKV"/>
<dbReference type="OrthoDB" id="10006572at2759"/>
<dbReference type="PhylomeDB" id="Q19849"/>
<dbReference type="Reactome" id="R-CEL-2032785">
    <property type="pathway name" value="YAP1- and WWTR1 (TAZ)-stimulated gene expression"/>
</dbReference>
<dbReference type="Reactome" id="R-CEL-8951671">
    <property type="pathway name" value="RUNX3 regulates YAP1-mediated transcription"/>
</dbReference>
<dbReference type="SignaLink" id="Q19849"/>
<dbReference type="PRO" id="PR:Q19849"/>
<dbReference type="Proteomes" id="UP000001940">
    <property type="component" value="Chromosome II"/>
</dbReference>
<dbReference type="Bgee" id="WBGene00001208">
    <property type="expression patterns" value="Expressed in pharyngeal muscle cell (C elegans) and 3 other cell types or tissues"/>
</dbReference>
<dbReference type="ExpressionAtlas" id="Q19849">
    <property type="expression patterns" value="baseline and differential"/>
</dbReference>
<dbReference type="GO" id="GO:0005634">
    <property type="term" value="C:nucleus"/>
    <property type="evidence" value="ECO:0000314"/>
    <property type="project" value="UniProtKB"/>
</dbReference>
<dbReference type="GO" id="GO:0090575">
    <property type="term" value="C:RNA polymerase II transcription regulator complex"/>
    <property type="evidence" value="ECO:0000353"/>
    <property type="project" value="WormBase"/>
</dbReference>
<dbReference type="GO" id="GO:0005667">
    <property type="term" value="C:transcription regulator complex"/>
    <property type="evidence" value="ECO:0000318"/>
    <property type="project" value="GO_Central"/>
</dbReference>
<dbReference type="GO" id="GO:0000981">
    <property type="term" value="F:DNA-binding transcription factor activity, RNA polymerase II-specific"/>
    <property type="evidence" value="ECO:0000250"/>
    <property type="project" value="WormBase"/>
</dbReference>
<dbReference type="GO" id="GO:0000978">
    <property type="term" value="F:RNA polymerase II cis-regulatory region sequence-specific DNA binding"/>
    <property type="evidence" value="ECO:0000315"/>
    <property type="project" value="UniProtKB"/>
</dbReference>
<dbReference type="GO" id="GO:0061629">
    <property type="term" value="F:RNA polymerase II-specific DNA-binding transcription factor binding"/>
    <property type="evidence" value="ECO:0000353"/>
    <property type="project" value="UniProtKB"/>
</dbReference>
<dbReference type="GO" id="GO:0001223">
    <property type="term" value="F:transcription coactivator binding"/>
    <property type="evidence" value="ECO:0000353"/>
    <property type="project" value="WormBase"/>
</dbReference>
<dbReference type="GO" id="GO:0055059">
    <property type="term" value="P:asymmetric neuroblast division"/>
    <property type="evidence" value="ECO:0000315"/>
    <property type="project" value="UniProtKB"/>
</dbReference>
<dbReference type="GO" id="GO:0048568">
    <property type="term" value="P:embryonic organ development"/>
    <property type="evidence" value="ECO:0000318"/>
    <property type="project" value="GO_Central"/>
</dbReference>
<dbReference type="GO" id="GO:0035329">
    <property type="term" value="P:hippo signaling"/>
    <property type="evidence" value="ECO:0000318"/>
    <property type="project" value="GO_Central"/>
</dbReference>
<dbReference type="GO" id="GO:0060179">
    <property type="term" value="P:male mating behavior"/>
    <property type="evidence" value="ECO:0000315"/>
    <property type="project" value="UniProtKB"/>
</dbReference>
<dbReference type="GO" id="GO:0000122">
    <property type="term" value="P:negative regulation of transcription by RNA polymerase II"/>
    <property type="evidence" value="ECO:0000315"/>
    <property type="project" value="UniProtKB"/>
</dbReference>
<dbReference type="GO" id="GO:0030182">
    <property type="term" value="P:neuron differentiation"/>
    <property type="evidence" value="ECO:0000315"/>
    <property type="project" value="WormBase"/>
</dbReference>
<dbReference type="GO" id="GO:0106027">
    <property type="term" value="P:neuron projection organization"/>
    <property type="evidence" value="ECO:0000315"/>
    <property type="project" value="UniProtKB"/>
</dbReference>
<dbReference type="GO" id="GO:0045893">
    <property type="term" value="P:positive regulation of DNA-templated transcription"/>
    <property type="evidence" value="ECO:0000316"/>
    <property type="project" value="UniProtKB"/>
</dbReference>
<dbReference type="GO" id="GO:0031536">
    <property type="term" value="P:positive regulation of exit from mitosis"/>
    <property type="evidence" value="ECO:0000315"/>
    <property type="project" value="UniProtKB"/>
</dbReference>
<dbReference type="GO" id="GO:0045944">
    <property type="term" value="P:positive regulation of transcription by RNA polymerase II"/>
    <property type="evidence" value="ECO:0000315"/>
    <property type="project" value="WormBase"/>
</dbReference>
<dbReference type="GO" id="GO:0006355">
    <property type="term" value="P:regulation of DNA-templated transcription"/>
    <property type="evidence" value="ECO:0000316"/>
    <property type="project" value="UniProtKB"/>
</dbReference>
<dbReference type="GO" id="GO:0010468">
    <property type="term" value="P:regulation of gene expression"/>
    <property type="evidence" value="ECO:0000315"/>
    <property type="project" value="UniProtKB"/>
</dbReference>
<dbReference type="GO" id="GO:0006357">
    <property type="term" value="P:regulation of transcription by RNA polymerase II"/>
    <property type="evidence" value="ECO:0000318"/>
    <property type="project" value="GO_Central"/>
</dbReference>
<dbReference type="FunFam" id="2.70.50.80:FF:000005">
    <property type="entry name" value="Transcription enhancer factor-like protein egl-44"/>
    <property type="match status" value="1"/>
</dbReference>
<dbReference type="Gene3D" id="2.70.50.80">
    <property type="match status" value="1"/>
</dbReference>
<dbReference type="Gene3D" id="6.10.20.40">
    <property type="entry name" value="TEA/ATTS domain"/>
    <property type="match status" value="1"/>
</dbReference>
<dbReference type="InterPro" id="IPR000818">
    <property type="entry name" value="TEA/ATTS_dom"/>
</dbReference>
<dbReference type="InterPro" id="IPR038096">
    <property type="entry name" value="TEA/ATTS_sf"/>
</dbReference>
<dbReference type="InterPro" id="IPR050937">
    <property type="entry name" value="TEC1_TEAD_TF"/>
</dbReference>
<dbReference type="InterPro" id="IPR016361">
    <property type="entry name" value="TEF_metazoa"/>
</dbReference>
<dbReference type="InterPro" id="IPR041086">
    <property type="entry name" value="YBD"/>
</dbReference>
<dbReference type="PANTHER" id="PTHR11834:SF0">
    <property type="entry name" value="PROTEIN SCALLOPED"/>
    <property type="match status" value="1"/>
</dbReference>
<dbReference type="PANTHER" id="PTHR11834">
    <property type="entry name" value="TRANSCRIPTIONAL ENHANCER FACTOR TEF RELATED"/>
    <property type="match status" value="1"/>
</dbReference>
<dbReference type="Pfam" id="PF01285">
    <property type="entry name" value="TEA"/>
    <property type="match status" value="1"/>
</dbReference>
<dbReference type="Pfam" id="PF17725">
    <property type="entry name" value="YBD"/>
    <property type="match status" value="1"/>
</dbReference>
<dbReference type="PIRSF" id="PIRSF002603">
    <property type="entry name" value="TEF"/>
    <property type="match status" value="1"/>
</dbReference>
<dbReference type="PRINTS" id="PR00065">
    <property type="entry name" value="TEADOMAIN"/>
</dbReference>
<dbReference type="SMART" id="SM00426">
    <property type="entry name" value="TEA"/>
    <property type="match status" value="1"/>
</dbReference>
<dbReference type="PROSITE" id="PS00554">
    <property type="entry name" value="TEA_1"/>
    <property type="match status" value="1"/>
</dbReference>
<dbReference type="PROSITE" id="PS51088">
    <property type="entry name" value="TEA_2"/>
    <property type="match status" value="1"/>
</dbReference>
<feature type="chain" id="PRO_0000205944" description="Transcription enhancer factor-like protein egl-44">
    <location>
        <begin position="1"/>
        <end position="486"/>
    </location>
</feature>
<feature type="DNA-binding region" description="TEA" evidence="1">
    <location>
        <begin position="88"/>
        <end position="164"/>
    </location>
</feature>
<feature type="region of interest" description="Disordered" evidence="2">
    <location>
        <begin position="47"/>
        <end position="87"/>
    </location>
</feature>
<feature type="region of interest" description="Disordered" evidence="2">
    <location>
        <begin position="165"/>
        <end position="188"/>
    </location>
</feature>
<feature type="compositionally biased region" description="Low complexity" evidence="2">
    <location>
        <begin position="47"/>
        <end position="57"/>
    </location>
</feature>
<feature type="splice variant" id="VSP_041801" description="In isoform d." evidence="10">
    <location>
        <begin position="1"/>
        <end position="75"/>
    </location>
</feature>
<feature type="splice variant" id="VSP_041802" description="In isoform f." evidence="10">
    <location>
        <begin position="1"/>
        <end position="58"/>
    </location>
</feature>
<feature type="splice variant" id="VSP_041803" description="In isoform b and isoform c." evidence="10">
    <location>
        <begin position="1"/>
        <end position="15"/>
    </location>
</feature>
<feature type="splice variant" id="VSP_041804" description="In isoform b and isoform f." evidence="10">
    <original>K</original>
    <variation>KVPFHLNT</variation>
    <location>
        <position position="170"/>
    </location>
</feature>
<feature type="mutagenesis site" description="In cas140; production of an extra neuron from the Q lineage and a mild egg-laying defect." evidence="6">
    <original>A</original>
    <variation>V</variation>
    <location>
        <position position="91"/>
    </location>
</feature>
<feature type="mutagenesis site" description="In n1080 and cas58; two-fold reduction in mRNA levels. Production of an extra neuron from the Q lineage and a mild egg-laying defect. Decreased mating efficiency in males, as a result of deficiency in vulval location. Significant decrease in expression of ceh-26 and lov-1 in HOB neuron, and some reduction in expression of pkd-2 and nlp-8." evidence="3 4 6">
    <original>A</original>
    <variation>V</variation>
    <location>
        <position position="134"/>
    </location>
</feature>
<feature type="mutagenesis site" description="In n998, n1087 and cas6; two-fold reduction in mRNA levels. Production of an extra neuron from the Q lineage and a mild egg-laying defect." evidence="3 6">
    <original>R</original>
    <variation>Q</variation>
    <location>
        <position position="140"/>
    </location>
</feature>
<feature type="mutagenesis site" description="In cas3; production of an extra neuron from the Q lineage and a mild egg-laying defect." evidence="6">
    <original>R</original>
    <variation>K</variation>
    <location>
        <position position="145"/>
    </location>
</feature>